<accession>Q9E8F2</accession>
<proteinExistence type="evidence at protein level"/>
<organismHost>
    <name type="scientific">Bos taurus</name>
    <name type="common">Bovine</name>
    <dbReference type="NCBI Taxonomy" id="9913"/>
</organismHost>
<protein>
    <recommendedName>
        <fullName evidence="1">Non-structural protein 5</fullName>
        <shortName evidence="1">NSP5</shortName>
    </recommendedName>
    <alternativeName>
        <fullName evidence="1">NS26</fullName>
    </alternativeName>
</protein>
<name>NSP5_ROTRF</name>
<evidence type="ECO:0000255" key="1">
    <source>
        <dbReference type="HAMAP-Rule" id="MF_04092"/>
    </source>
</evidence>
<evidence type="ECO:0000256" key="2">
    <source>
        <dbReference type="SAM" id="MobiDB-lite"/>
    </source>
</evidence>
<evidence type="ECO:0000269" key="3">
    <source>
    </source>
</evidence>
<reference key="1">
    <citation type="submission" date="1999-09" db="EMBL/GenBank/DDBJ databases">
        <authorList>
            <person name="Duarte M."/>
            <person name="Castagne N."/>
            <person name="Poncet D."/>
        </authorList>
    </citation>
    <scope>NUCLEOTIDE SEQUENCE [MRNA]</scope>
</reference>
<reference key="2">
    <citation type="journal article" date="1997" name="J. Virol.">
        <title>In vivo and in vitro phosphorylation of rotavirus NSP5 correlates with its localization in viroplasms.</title>
        <authorList>
            <person name="Poncet D."/>
            <person name="Lindenbaum P."/>
            <person name="L'Haridon R."/>
            <person name="Cohen J."/>
        </authorList>
    </citation>
    <scope>SUBUNIT</scope>
    <scope>SUBCELLULAR LOCATION</scope>
</reference>
<reference key="3">
    <citation type="journal article" date="2003" name="J. Virol.">
        <title>Rotavirus nonstructural protein NSP5 interacts with major core protein VP2.</title>
        <authorList>
            <person name="Berois M."/>
            <person name="Sapin C."/>
            <person name="Erk I."/>
            <person name="Poncet D."/>
            <person name="Cohen J."/>
        </authorList>
    </citation>
    <scope>INTERACTION WITH VP2</scope>
</reference>
<feature type="chain" id="PRO_0000367824" description="Non-structural protein 5">
    <location>
        <begin position="1"/>
        <end position="198"/>
    </location>
</feature>
<feature type="region of interest" description="Disordered" evidence="2">
    <location>
        <begin position="16"/>
        <end position="37"/>
    </location>
</feature>
<feature type="region of interest" description="Disordered" evidence="2">
    <location>
        <begin position="53"/>
        <end position="72"/>
    </location>
</feature>
<feature type="region of interest" description="Disordered" evidence="2">
    <location>
        <begin position="85"/>
        <end position="106"/>
    </location>
</feature>
<feature type="region of interest" description="Disordered" evidence="2">
    <location>
        <begin position="123"/>
        <end position="166"/>
    </location>
</feature>
<feature type="compositionally biased region" description="Low complexity" evidence="2">
    <location>
        <begin position="16"/>
        <end position="30"/>
    </location>
</feature>
<feature type="compositionally biased region" description="Polar residues" evidence="2">
    <location>
        <begin position="91"/>
        <end position="104"/>
    </location>
</feature>
<feature type="compositionally biased region" description="Acidic residues" evidence="2">
    <location>
        <begin position="153"/>
        <end position="166"/>
    </location>
</feature>
<feature type="binding site" evidence="1">
    <location>
        <position position="92"/>
    </location>
    <ligand>
        <name>Mg(2+)</name>
        <dbReference type="ChEBI" id="CHEBI:18420"/>
    </ligand>
</feature>
<feature type="modified residue" description="Phosphoserine; by host CK1" evidence="1">
    <location>
        <position position="67"/>
    </location>
</feature>
<feature type="modified residue" description="Phosphoserine; by host" evidence="1">
    <location>
        <position position="154"/>
    </location>
</feature>
<feature type="modified residue" description="Phosphoserine; by host" evidence="1">
    <location>
        <position position="156"/>
    </location>
</feature>
<feature type="modified residue" description="Phosphoserine; by host" evidence="1">
    <location>
        <position position="164"/>
    </location>
</feature>
<feature type="modified residue" description="Phosphoserine; by host" evidence="1">
    <location>
        <position position="166"/>
    </location>
</feature>
<keyword id="KW-0325">Glycoprotein</keyword>
<keyword id="KW-1035">Host cytoplasm</keyword>
<keyword id="KW-0460">Magnesium</keyword>
<keyword id="KW-0479">Metal-binding</keyword>
<keyword id="KW-0547">Nucleotide-binding</keyword>
<keyword id="KW-0597">Phosphoprotein</keyword>
<keyword id="KW-0694">RNA-binding</keyword>
<sequence>MSLSIDVTSLPSISSSIYKNESSSTTSTLSGKSIGRSEQYISPDAEAFSKYMLSKSPEDIGPSDSASNDPLTSFSIRSNAVKTNADAGVSMDSSTQSRPSSNVGCDQVDFSFNKGISMNANLDSSISISTSSKKEKSKSDHKSRKHYPKIEAESDSDDYILDDSDSDDGKCKNCKYKRKYFALRMRMKQVAMQLIEDL</sequence>
<comment type="function">
    <text evidence="1">Plays an essential role in the viral genome replication. Participates, together with NSP2, in the formation of viral factories (viroplasms), which are large inclusions in the host cytoplasm where replication intermediates are assembled and viral RNA replication takes place. Orchestrates the recruitment of viroplasmic proteins such as capsid proteins to these factories. Participates in the selective exclusion of host proteins from stress granules (SG) and P bodies (PB). Also participates in the sequestration of these remodeled organelles in viral factories.</text>
</comment>
<comment type="cofactor">
    <text>Magnesium is required for ATPase activity.</text>
</comment>
<comment type="cofactor">
    <cofactor evidence="1">
        <name>Mg(2+)</name>
        <dbReference type="ChEBI" id="CHEBI:18420"/>
    </cofactor>
</comment>
<comment type="subunit">
    <text evidence="1">Homodimer. Interacts with VP1. Interacts with VP2. Interacts with NSP2; this interaction leads to up-regulation of NSP5 hyperphosphorylation and formation of virus factories. Interacts with NSP6. Participates in the selective exclusion of host proteins from stress granules (SG) and P bodies (PB). Also participates in the sequestration of these remodeled organelles in viral factories.</text>
</comment>
<comment type="subcellular location">
    <subcellularLocation>
        <location evidence="1 3">Host cytoplasm</location>
    </subcellularLocation>
    <text evidence="1">Found in spherical cytoplasmic structures, called virus factories, that appear early after infection and are the site of viral replication and packaging.</text>
</comment>
<comment type="PTM">
    <text evidence="1">O-glycosylated.</text>
</comment>
<comment type="PTM">
    <text evidence="1">Hyperphosphorylated on serine residues, when in dimeric form. Phosphorylation by host CK1 is required for the hyperphosphorylation of NSP5 dimer.</text>
</comment>
<comment type="similarity">
    <text evidence="1">Belongs to the rotavirus NSP5 family.</text>
</comment>
<organism>
    <name type="scientific">Rotavirus A (strain RVA/Cow/France/RF/1975/G6P6[1])</name>
    <name type="common">RV-A</name>
    <dbReference type="NCBI Taxonomy" id="10933"/>
    <lineage>
        <taxon>Viruses</taxon>
        <taxon>Riboviria</taxon>
        <taxon>Orthornavirae</taxon>
        <taxon>Duplornaviricota</taxon>
        <taxon>Resentoviricetes</taxon>
        <taxon>Reovirales</taxon>
        <taxon>Sedoreoviridae</taxon>
        <taxon>Rotavirus</taxon>
        <taxon>Rotavirus A</taxon>
    </lineage>
</organism>
<dbReference type="EMBL" id="AF188126">
    <property type="protein sequence ID" value="AAG15311.1"/>
    <property type="molecule type" value="mRNA"/>
</dbReference>
<dbReference type="SMR" id="Q9E8F2"/>
<dbReference type="Proteomes" id="UP000007179">
    <property type="component" value="Genome"/>
</dbReference>
<dbReference type="GO" id="GO:0030430">
    <property type="term" value="C:host cell cytoplasm"/>
    <property type="evidence" value="ECO:0007669"/>
    <property type="project" value="UniProtKB-SubCell"/>
</dbReference>
<dbReference type="GO" id="GO:0016887">
    <property type="term" value="F:ATP hydrolysis activity"/>
    <property type="evidence" value="ECO:0007669"/>
    <property type="project" value="UniProtKB-UniRule"/>
</dbReference>
<dbReference type="GO" id="GO:0000287">
    <property type="term" value="F:magnesium ion binding"/>
    <property type="evidence" value="ECO:0007669"/>
    <property type="project" value="UniProtKB-UniRule"/>
</dbReference>
<dbReference type="GO" id="GO:0000166">
    <property type="term" value="F:nucleotide binding"/>
    <property type="evidence" value="ECO:0007669"/>
    <property type="project" value="UniProtKB-UniRule"/>
</dbReference>
<dbReference type="GO" id="GO:0003723">
    <property type="term" value="F:RNA binding"/>
    <property type="evidence" value="ECO:0007669"/>
    <property type="project" value="UniProtKB-UniRule"/>
</dbReference>
<dbReference type="GO" id="GO:0019079">
    <property type="term" value="P:viral genome replication"/>
    <property type="evidence" value="ECO:0007669"/>
    <property type="project" value="UniProtKB-UniRule"/>
</dbReference>
<dbReference type="HAMAP" id="MF_04092">
    <property type="entry name" value="ROTA_NSP5"/>
    <property type="match status" value="1"/>
</dbReference>
<dbReference type="InterPro" id="IPR002512">
    <property type="entry name" value="Rotavirus_A/C_NSP5"/>
</dbReference>
<dbReference type="Pfam" id="PF01525">
    <property type="entry name" value="Rota_NS26"/>
    <property type="match status" value="2"/>
</dbReference>
<dbReference type="PIRSF" id="PIRSF004006">
    <property type="entry name" value="Rota_NS26"/>
    <property type="match status" value="1"/>
</dbReference>